<feature type="chain" id="PRO_0000145978" description="Phosphoglycerate kinase">
    <location>
        <begin position="1"/>
        <end position="393"/>
    </location>
</feature>
<feature type="binding site" evidence="1">
    <location>
        <begin position="21"/>
        <end position="23"/>
    </location>
    <ligand>
        <name>substrate</name>
    </ligand>
</feature>
<feature type="binding site" evidence="1">
    <location>
        <position position="36"/>
    </location>
    <ligand>
        <name>substrate</name>
    </ligand>
</feature>
<feature type="binding site" evidence="1">
    <location>
        <begin position="59"/>
        <end position="62"/>
    </location>
    <ligand>
        <name>substrate</name>
    </ligand>
</feature>
<feature type="binding site" evidence="1">
    <location>
        <position position="118"/>
    </location>
    <ligand>
        <name>substrate</name>
    </ligand>
</feature>
<feature type="binding site" evidence="1">
    <location>
        <position position="151"/>
    </location>
    <ligand>
        <name>substrate</name>
    </ligand>
</feature>
<feature type="binding site" evidence="1">
    <location>
        <position position="201"/>
    </location>
    <ligand>
        <name>ATP</name>
        <dbReference type="ChEBI" id="CHEBI:30616"/>
    </ligand>
</feature>
<feature type="binding site" evidence="1">
    <location>
        <position position="323"/>
    </location>
    <ligand>
        <name>ATP</name>
        <dbReference type="ChEBI" id="CHEBI:30616"/>
    </ligand>
</feature>
<feature type="binding site" evidence="1">
    <location>
        <begin position="349"/>
        <end position="352"/>
    </location>
    <ligand>
        <name>ATP</name>
        <dbReference type="ChEBI" id="CHEBI:30616"/>
    </ligand>
</feature>
<accession>Q8ENP3</accession>
<keyword id="KW-0067">ATP-binding</keyword>
<keyword id="KW-0963">Cytoplasm</keyword>
<keyword id="KW-0324">Glycolysis</keyword>
<keyword id="KW-0418">Kinase</keyword>
<keyword id="KW-0547">Nucleotide-binding</keyword>
<keyword id="KW-1185">Reference proteome</keyword>
<keyword id="KW-0808">Transferase</keyword>
<evidence type="ECO:0000255" key="1">
    <source>
        <dbReference type="HAMAP-Rule" id="MF_00145"/>
    </source>
</evidence>
<proteinExistence type="inferred from homology"/>
<protein>
    <recommendedName>
        <fullName evidence="1">Phosphoglycerate kinase</fullName>
        <ecNumber evidence="1">2.7.2.3</ecNumber>
    </recommendedName>
</protein>
<name>PGK_OCEIH</name>
<sequence length="393" mass="42119">MNKKTINDLQVEGKRVFTRVDFNVPLKDGEITDDTRIRAALPTIEQLTAQGAKVILASHLGRPKGTVVEELRLDPVADRLSDLLGKEVLKTDQVYGEEVDQAISELENGGVLLIENVRFEAGEEKNDPELVEAFANMADLYVNDAFGAAHRAHASTTGVAEKLPAAAGKLMEKEIEALGNALENPERPFTAIVGGAKVKDKISVIDNLLDKVDNLIIGGGLAYTFIKAQGHEIGKSLLEEDKIDLAKEFMNKAKEKGVNFVLPVDAIVADDFSEEANTKIVDIDKIPSDWEALDIGTKTREKYSSIVKDSKLVIWNGPMGVFELNAFAGGTKAVAEALASTEGYSIIGGGDSAAAVEKFGLAEEMDHVSTGGGASLEFMEGKVLPGLAALNDK</sequence>
<reference key="1">
    <citation type="journal article" date="2002" name="Nucleic Acids Res.">
        <title>Genome sequence of Oceanobacillus iheyensis isolated from the Iheya Ridge and its unexpected adaptive capabilities to extreme environments.</title>
        <authorList>
            <person name="Takami H."/>
            <person name="Takaki Y."/>
            <person name="Uchiyama I."/>
        </authorList>
    </citation>
    <scope>NUCLEOTIDE SEQUENCE [LARGE SCALE GENOMIC DNA]</scope>
    <source>
        <strain>DSM 14371 / CIP 107618 / JCM 11309 / KCTC 3954 / HTE831</strain>
    </source>
</reference>
<gene>
    <name evidence="1" type="primary">pgk</name>
    <name type="ordered locus">OB2437</name>
</gene>
<organism>
    <name type="scientific">Oceanobacillus iheyensis (strain DSM 14371 / CIP 107618 / JCM 11309 / KCTC 3954 / HTE831)</name>
    <dbReference type="NCBI Taxonomy" id="221109"/>
    <lineage>
        <taxon>Bacteria</taxon>
        <taxon>Bacillati</taxon>
        <taxon>Bacillota</taxon>
        <taxon>Bacilli</taxon>
        <taxon>Bacillales</taxon>
        <taxon>Bacillaceae</taxon>
        <taxon>Oceanobacillus</taxon>
    </lineage>
</organism>
<dbReference type="EC" id="2.7.2.3" evidence="1"/>
<dbReference type="EMBL" id="BA000028">
    <property type="protein sequence ID" value="BAC14393.1"/>
    <property type="molecule type" value="Genomic_DNA"/>
</dbReference>
<dbReference type="RefSeq" id="WP_011066828.1">
    <property type="nucleotide sequence ID" value="NC_004193.1"/>
</dbReference>
<dbReference type="SMR" id="Q8ENP3"/>
<dbReference type="STRING" id="221109.gene:10734688"/>
<dbReference type="KEGG" id="oih:OB2437"/>
<dbReference type="eggNOG" id="COG0126">
    <property type="taxonomic scope" value="Bacteria"/>
</dbReference>
<dbReference type="HOGENOM" id="CLU_025427_0_2_9"/>
<dbReference type="OrthoDB" id="9808460at2"/>
<dbReference type="PhylomeDB" id="Q8ENP3"/>
<dbReference type="UniPathway" id="UPA00109">
    <property type="reaction ID" value="UER00185"/>
</dbReference>
<dbReference type="Proteomes" id="UP000000822">
    <property type="component" value="Chromosome"/>
</dbReference>
<dbReference type="GO" id="GO:0005829">
    <property type="term" value="C:cytosol"/>
    <property type="evidence" value="ECO:0007669"/>
    <property type="project" value="TreeGrafter"/>
</dbReference>
<dbReference type="GO" id="GO:0043531">
    <property type="term" value="F:ADP binding"/>
    <property type="evidence" value="ECO:0007669"/>
    <property type="project" value="TreeGrafter"/>
</dbReference>
<dbReference type="GO" id="GO:0005524">
    <property type="term" value="F:ATP binding"/>
    <property type="evidence" value="ECO:0007669"/>
    <property type="project" value="UniProtKB-KW"/>
</dbReference>
<dbReference type="GO" id="GO:0004618">
    <property type="term" value="F:phosphoglycerate kinase activity"/>
    <property type="evidence" value="ECO:0007669"/>
    <property type="project" value="UniProtKB-UniRule"/>
</dbReference>
<dbReference type="GO" id="GO:0006094">
    <property type="term" value="P:gluconeogenesis"/>
    <property type="evidence" value="ECO:0007669"/>
    <property type="project" value="TreeGrafter"/>
</dbReference>
<dbReference type="GO" id="GO:0006096">
    <property type="term" value="P:glycolytic process"/>
    <property type="evidence" value="ECO:0007669"/>
    <property type="project" value="UniProtKB-UniRule"/>
</dbReference>
<dbReference type="CDD" id="cd00318">
    <property type="entry name" value="Phosphoglycerate_kinase"/>
    <property type="match status" value="1"/>
</dbReference>
<dbReference type="FunFam" id="3.40.50.1260:FF:000003">
    <property type="entry name" value="Phosphoglycerate kinase"/>
    <property type="match status" value="1"/>
</dbReference>
<dbReference type="FunFam" id="3.40.50.1260:FF:000006">
    <property type="entry name" value="Phosphoglycerate kinase"/>
    <property type="match status" value="1"/>
</dbReference>
<dbReference type="Gene3D" id="3.40.50.1260">
    <property type="entry name" value="Phosphoglycerate kinase, N-terminal domain"/>
    <property type="match status" value="2"/>
</dbReference>
<dbReference type="HAMAP" id="MF_00145">
    <property type="entry name" value="Phosphoglyc_kinase"/>
    <property type="match status" value="1"/>
</dbReference>
<dbReference type="InterPro" id="IPR001576">
    <property type="entry name" value="Phosphoglycerate_kinase"/>
</dbReference>
<dbReference type="InterPro" id="IPR015824">
    <property type="entry name" value="Phosphoglycerate_kinase_N"/>
</dbReference>
<dbReference type="InterPro" id="IPR036043">
    <property type="entry name" value="Phosphoglycerate_kinase_sf"/>
</dbReference>
<dbReference type="PANTHER" id="PTHR11406">
    <property type="entry name" value="PHOSPHOGLYCERATE KINASE"/>
    <property type="match status" value="1"/>
</dbReference>
<dbReference type="PANTHER" id="PTHR11406:SF23">
    <property type="entry name" value="PHOSPHOGLYCERATE KINASE 1, CHLOROPLASTIC-RELATED"/>
    <property type="match status" value="1"/>
</dbReference>
<dbReference type="Pfam" id="PF00162">
    <property type="entry name" value="PGK"/>
    <property type="match status" value="1"/>
</dbReference>
<dbReference type="PIRSF" id="PIRSF000724">
    <property type="entry name" value="Pgk"/>
    <property type="match status" value="1"/>
</dbReference>
<dbReference type="PRINTS" id="PR00477">
    <property type="entry name" value="PHGLYCKINASE"/>
</dbReference>
<dbReference type="SUPFAM" id="SSF53748">
    <property type="entry name" value="Phosphoglycerate kinase"/>
    <property type="match status" value="1"/>
</dbReference>
<comment type="catalytic activity">
    <reaction evidence="1">
        <text>(2R)-3-phosphoglycerate + ATP = (2R)-3-phospho-glyceroyl phosphate + ADP</text>
        <dbReference type="Rhea" id="RHEA:14801"/>
        <dbReference type="ChEBI" id="CHEBI:30616"/>
        <dbReference type="ChEBI" id="CHEBI:57604"/>
        <dbReference type="ChEBI" id="CHEBI:58272"/>
        <dbReference type="ChEBI" id="CHEBI:456216"/>
        <dbReference type="EC" id="2.7.2.3"/>
    </reaction>
</comment>
<comment type="pathway">
    <text evidence="1">Carbohydrate degradation; glycolysis; pyruvate from D-glyceraldehyde 3-phosphate: step 2/5.</text>
</comment>
<comment type="subunit">
    <text evidence="1">Monomer.</text>
</comment>
<comment type="subcellular location">
    <subcellularLocation>
        <location evidence="1">Cytoplasm</location>
    </subcellularLocation>
</comment>
<comment type="similarity">
    <text evidence="1">Belongs to the phosphoglycerate kinase family.</text>
</comment>